<organism>
    <name type="scientific">Buchnera aphidicola subsp. Acyrthosiphon pisum (strain 5A)</name>
    <dbReference type="NCBI Taxonomy" id="563178"/>
    <lineage>
        <taxon>Bacteria</taxon>
        <taxon>Pseudomonadati</taxon>
        <taxon>Pseudomonadota</taxon>
        <taxon>Gammaproteobacteria</taxon>
        <taxon>Enterobacterales</taxon>
        <taxon>Erwiniaceae</taxon>
        <taxon>Buchnera</taxon>
    </lineage>
</organism>
<feature type="chain" id="PRO_1000166856" description="Large ribosomal subunit protein uL13">
    <location>
        <begin position="1"/>
        <end position="142"/>
    </location>
</feature>
<accession>B8D9H4</accession>
<dbReference type="EMBL" id="CP001161">
    <property type="protein sequence ID" value="ACL30745.1"/>
    <property type="molecule type" value="Genomic_DNA"/>
</dbReference>
<dbReference type="RefSeq" id="WP_009874348.1">
    <property type="nucleotide sequence ID" value="NC_011833.1"/>
</dbReference>
<dbReference type="SMR" id="B8D9H4"/>
<dbReference type="KEGG" id="bap:BUAP5A_384"/>
<dbReference type="HOGENOM" id="CLU_082184_2_2_6"/>
<dbReference type="OrthoDB" id="9801330at2"/>
<dbReference type="Proteomes" id="UP000006904">
    <property type="component" value="Chromosome"/>
</dbReference>
<dbReference type="GO" id="GO:0022625">
    <property type="term" value="C:cytosolic large ribosomal subunit"/>
    <property type="evidence" value="ECO:0007669"/>
    <property type="project" value="TreeGrafter"/>
</dbReference>
<dbReference type="GO" id="GO:0003729">
    <property type="term" value="F:mRNA binding"/>
    <property type="evidence" value="ECO:0007669"/>
    <property type="project" value="TreeGrafter"/>
</dbReference>
<dbReference type="GO" id="GO:0003735">
    <property type="term" value="F:structural constituent of ribosome"/>
    <property type="evidence" value="ECO:0007669"/>
    <property type="project" value="InterPro"/>
</dbReference>
<dbReference type="GO" id="GO:0017148">
    <property type="term" value="P:negative regulation of translation"/>
    <property type="evidence" value="ECO:0007669"/>
    <property type="project" value="TreeGrafter"/>
</dbReference>
<dbReference type="GO" id="GO:0006412">
    <property type="term" value="P:translation"/>
    <property type="evidence" value="ECO:0007669"/>
    <property type="project" value="UniProtKB-UniRule"/>
</dbReference>
<dbReference type="CDD" id="cd00392">
    <property type="entry name" value="Ribosomal_L13"/>
    <property type="match status" value="1"/>
</dbReference>
<dbReference type="FunFam" id="3.90.1180.10:FF:000001">
    <property type="entry name" value="50S ribosomal protein L13"/>
    <property type="match status" value="1"/>
</dbReference>
<dbReference type="Gene3D" id="3.90.1180.10">
    <property type="entry name" value="Ribosomal protein L13"/>
    <property type="match status" value="1"/>
</dbReference>
<dbReference type="HAMAP" id="MF_01366">
    <property type="entry name" value="Ribosomal_uL13"/>
    <property type="match status" value="1"/>
</dbReference>
<dbReference type="InterPro" id="IPR005822">
    <property type="entry name" value="Ribosomal_uL13"/>
</dbReference>
<dbReference type="InterPro" id="IPR005823">
    <property type="entry name" value="Ribosomal_uL13_bac-type"/>
</dbReference>
<dbReference type="InterPro" id="IPR023563">
    <property type="entry name" value="Ribosomal_uL13_CS"/>
</dbReference>
<dbReference type="InterPro" id="IPR036899">
    <property type="entry name" value="Ribosomal_uL13_sf"/>
</dbReference>
<dbReference type="NCBIfam" id="TIGR01066">
    <property type="entry name" value="rplM_bact"/>
    <property type="match status" value="1"/>
</dbReference>
<dbReference type="PANTHER" id="PTHR11545:SF2">
    <property type="entry name" value="LARGE RIBOSOMAL SUBUNIT PROTEIN UL13M"/>
    <property type="match status" value="1"/>
</dbReference>
<dbReference type="PANTHER" id="PTHR11545">
    <property type="entry name" value="RIBOSOMAL PROTEIN L13"/>
    <property type="match status" value="1"/>
</dbReference>
<dbReference type="Pfam" id="PF00572">
    <property type="entry name" value="Ribosomal_L13"/>
    <property type="match status" value="1"/>
</dbReference>
<dbReference type="PIRSF" id="PIRSF002181">
    <property type="entry name" value="Ribosomal_L13"/>
    <property type="match status" value="1"/>
</dbReference>
<dbReference type="SUPFAM" id="SSF52161">
    <property type="entry name" value="Ribosomal protein L13"/>
    <property type="match status" value="1"/>
</dbReference>
<dbReference type="PROSITE" id="PS00783">
    <property type="entry name" value="RIBOSOMAL_L13"/>
    <property type="match status" value="1"/>
</dbReference>
<comment type="function">
    <text evidence="1">This protein is one of the early assembly proteins of the 50S ribosomal subunit, although it is not seen to bind rRNA by itself. It is important during the early stages of 50S assembly.</text>
</comment>
<comment type="subunit">
    <text evidence="1">Part of the 50S ribosomal subunit.</text>
</comment>
<comment type="similarity">
    <text evidence="1">Belongs to the universal ribosomal protein uL13 family.</text>
</comment>
<protein>
    <recommendedName>
        <fullName evidence="1">Large ribosomal subunit protein uL13</fullName>
    </recommendedName>
    <alternativeName>
        <fullName evidence="2">50S ribosomal protein L13</fullName>
    </alternativeName>
</protein>
<gene>
    <name evidence="1" type="primary">rplM</name>
    <name type="ordered locus">BUAP5A_384</name>
</gene>
<reference key="1">
    <citation type="journal article" date="2009" name="Science">
        <title>The dynamics and time scale of ongoing genomic erosion in symbiotic bacteria.</title>
        <authorList>
            <person name="Moran N.A."/>
            <person name="McLaughlin H.J."/>
            <person name="Sorek R."/>
        </authorList>
    </citation>
    <scope>NUCLEOTIDE SEQUENCE [LARGE SCALE GENOMIC DNA]</scope>
    <source>
        <strain>5A</strain>
    </source>
</reference>
<evidence type="ECO:0000255" key="1">
    <source>
        <dbReference type="HAMAP-Rule" id="MF_01366"/>
    </source>
</evidence>
<evidence type="ECO:0000305" key="2"/>
<sequence>MKTFSIKSSNIKRHWYYVDATNKILGRLASALSFHLRGKHKTEYTPHLDTGDYIIVINASKILVTGNKRINKIYYHHTGYVGGIKQSRFEEMISSHPERVIEIAVKGMLPKGALGRSMFKKLKVFSNENHEHIAQCPQLLNI</sequence>
<name>RL13_BUCA5</name>
<keyword id="KW-0687">Ribonucleoprotein</keyword>
<keyword id="KW-0689">Ribosomal protein</keyword>
<proteinExistence type="inferred from homology"/>